<sequence>MDSTGRAYDGASEFKSVLVTEGTSHYTPVEVYNILDELKTIKITSTIAEQSVVSRTPIPLSKIGLQDVKKLFDINVIKCGSSLRIVDEPQVTFIVSYAKDIYDKFMCIEHDSAYEPSLTMHRVRVIYSMLNDYCAKMISEVPYESSFVGELPVKSVTLNKLGDRNMDALAEHLLFEHDVVNAQRENRIFYQRKSAPAVPVIFGDDLEPAVRERANLYHRYSVPYHQIELALHALANDLLSIQYCHPTVVYNYLSSRAPNFLRLDDQVSLKLTSAGIGTLMPRPVVQLLDYDLVYMSPLALNNLASRLLRKISLHLVMQMVTAVQQDLGEVVSVSSNVTNPASACLVRMNVQGVQTLAVFIAQSMLNPNISYGMISGLTLDCFSNFIYGACLMLFQALIPPSALTARQRLDINNRFAYFLIKCHATQATTARLVANQVIYPVDAIDQWQSNGRDVLVAIYNNLLPGELVLTNLIQTYFRGNTAQQAAEILIPADQTSYGANETRALSAPYLFGAPINMLAPDARLSTYKRDLALPDRSPILITTVEGQNSISIENLRHKTGLIRAMYLNGFVTQPPAWIRNANSNTALLSRFLDATPNLLGIYEAILANTYANAVNVYCDSVYRADIPIEWKLHQSVDPQDLLFGVFGIVPQYQILNEAVPDFFAGGEDILILQLIRAVYDTLSNKLGRNPADIFHLEEVFKVIEEIVSVLVQQKIDVRKYFTESMRSGSFSKPRWDNFLRRPVAQRLPNLYSVIMTQADHVYNYMTQLTHIIPITDCFYIVKNSGFVDRGSTGPVIASSSVYENVLKVVHTIADFDAANALRLQRRRVDNTSYTDSLSDMFNGLRSISSSEFVRSVNGRSVFTEGRIDAIKVNMRAKFDLQFITEEGGYSKPPNVKKLMFSDFLSFLDSHKSDYRPPLLTVPITIGLNNLGETNSNTLRMRSEAIDEYFSSYVGAQILVPINVVDTRVYTEFSELRNFFTGDVVIRDDPFDVWDGVKATYIPIGVHGVRLDPNGDQPPL</sequence>
<dbReference type="EMBL" id="X54620">
    <property type="protein sequence ID" value="CAA38440.1"/>
    <property type="molecule type" value="Genomic_RNA"/>
</dbReference>
<dbReference type="EMBL" id="D00607">
    <property type="protein sequence ID" value="BAA00482.1"/>
    <property type="molecule type" value="Genomic_RNA"/>
</dbReference>
<dbReference type="EMBL" id="D00693">
    <property type="protein sequence ID" value="BAA00597.1"/>
    <property type="molecule type" value="Genomic_RNA"/>
</dbReference>
<dbReference type="PIR" id="A45341">
    <property type="entry name" value="A45341"/>
</dbReference>
<dbReference type="PDB" id="1UF2">
    <property type="method" value="X-ray"/>
    <property type="resolution" value="3.50 A"/>
    <property type="chains" value="A/B=1-1019"/>
</dbReference>
<dbReference type="PDBsum" id="1UF2"/>
<dbReference type="SMR" id="P22472"/>
<dbReference type="GO" id="GO:0030430">
    <property type="term" value="C:host cell cytoplasm"/>
    <property type="evidence" value="ECO:0007669"/>
    <property type="project" value="UniProtKB-SubCell"/>
</dbReference>
<dbReference type="GO" id="GO:0039624">
    <property type="term" value="C:viral outer capsid"/>
    <property type="evidence" value="ECO:0007669"/>
    <property type="project" value="UniProtKB-KW"/>
</dbReference>
<dbReference type="GO" id="GO:0005198">
    <property type="term" value="F:structural molecule activity"/>
    <property type="evidence" value="ECO:0007669"/>
    <property type="project" value="InterPro"/>
</dbReference>
<dbReference type="InterPro" id="IPR016029">
    <property type="entry name" value="Inner_layer_core_VP3_Reovir"/>
</dbReference>
<dbReference type="InterPro" id="IPR015312">
    <property type="entry name" value="Innr_layr_core_VP3_Phytoreovir"/>
</dbReference>
<dbReference type="Pfam" id="PF09231">
    <property type="entry name" value="RDV-p3"/>
    <property type="match status" value="1"/>
</dbReference>
<dbReference type="SUPFAM" id="SSF56831">
    <property type="entry name" value="Reovirus inner layer core protein p3"/>
    <property type="match status" value="1"/>
</dbReference>
<proteinExistence type="evidence at protein level"/>
<evidence type="ECO:0000250" key="1"/>
<evidence type="ECO:0000269" key="2">
    <source>
    </source>
</evidence>
<evidence type="ECO:0000305" key="3"/>
<evidence type="ECO:0007829" key="4">
    <source>
        <dbReference type="PDB" id="1UF2"/>
    </source>
</evidence>
<accession>P22472</accession>
<feature type="chain" id="PRO_0000222782" description="Outer capsid protein P3">
    <location>
        <begin position="1"/>
        <end position="1019"/>
    </location>
</feature>
<feature type="sequence conflict" description="In Ref. 3; BAA00597." evidence="3" ref="3">
    <original>QR</original>
    <variation>HG</variation>
    <location>
        <begin position="183"/>
        <end position="184"/>
    </location>
</feature>
<feature type="sequence conflict" description="In Ref. 2; BAA00482." evidence="3" ref="2">
    <original>A</original>
    <variation>S</variation>
    <location>
        <position position="304"/>
    </location>
</feature>
<feature type="helix" evidence="4">
    <location>
        <begin position="16"/>
        <end position="18"/>
    </location>
</feature>
<feature type="turn" evidence="4">
    <location>
        <begin position="19"/>
        <end position="22"/>
    </location>
</feature>
<feature type="strand" evidence="4">
    <location>
        <begin position="23"/>
        <end position="25"/>
    </location>
</feature>
<feature type="helix" evidence="4">
    <location>
        <begin position="32"/>
        <end position="49"/>
    </location>
</feature>
<feature type="strand" evidence="4">
    <location>
        <begin position="61"/>
        <end position="64"/>
    </location>
</feature>
<feature type="helix" evidence="4">
    <location>
        <begin position="65"/>
        <end position="67"/>
    </location>
</feature>
<feature type="strand" evidence="4">
    <location>
        <begin position="72"/>
        <end position="79"/>
    </location>
</feature>
<feature type="strand" evidence="4">
    <location>
        <begin position="82"/>
        <end position="84"/>
    </location>
</feature>
<feature type="strand" evidence="4">
    <location>
        <begin position="90"/>
        <end position="97"/>
    </location>
</feature>
<feature type="helix" evidence="4">
    <location>
        <begin position="103"/>
        <end position="106"/>
    </location>
</feature>
<feature type="turn" evidence="4">
    <location>
        <begin position="112"/>
        <end position="114"/>
    </location>
</feature>
<feature type="helix" evidence="4">
    <location>
        <begin position="116"/>
        <end position="132"/>
    </location>
</feature>
<feature type="turn" evidence="4">
    <location>
        <begin position="133"/>
        <end position="135"/>
    </location>
</feature>
<feature type="strand" evidence="4">
    <location>
        <begin position="136"/>
        <end position="140"/>
    </location>
</feature>
<feature type="strand" evidence="4">
    <location>
        <begin position="143"/>
        <end position="148"/>
    </location>
</feature>
<feature type="strand" evidence="4">
    <location>
        <begin position="151"/>
        <end position="156"/>
    </location>
</feature>
<feature type="helix" evidence="4">
    <location>
        <begin position="158"/>
        <end position="160"/>
    </location>
</feature>
<feature type="helix" evidence="4">
    <location>
        <begin position="162"/>
        <end position="164"/>
    </location>
</feature>
<feature type="helix" evidence="4">
    <location>
        <begin position="166"/>
        <end position="170"/>
    </location>
</feature>
<feature type="strand" evidence="4">
    <location>
        <begin position="173"/>
        <end position="175"/>
    </location>
</feature>
<feature type="helix" evidence="4">
    <location>
        <begin position="176"/>
        <end position="189"/>
    </location>
</feature>
<feature type="strand" evidence="4">
    <location>
        <begin position="190"/>
        <end position="194"/>
    </location>
</feature>
<feature type="turn" evidence="4">
    <location>
        <begin position="208"/>
        <end position="210"/>
    </location>
</feature>
<feature type="helix" evidence="4">
    <location>
        <begin position="214"/>
        <end position="216"/>
    </location>
</feature>
<feature type="strand" evidence="4">
    <location>
        <begin position="217"/>
        <end position="224"/>
    </location>
</feature>
<feature type="helix" evidence="4">
    <location>
        <begin position="226"/>
        <end position="242"/>
    </location>
</feature>
<feature type="helix" evidence="4">
    <location>
        <begin position="246"/>
        <end position="255"/>
    </location>
</feature>
<feature type="strand" evidence="4">
    <location>
        <begin position="261"/>
        <end position="263"/>
    </location>
</feature>
<feature type="helix" evidence="4">
    <location>
        <begin position="265"/>
        <end position="272"/>
    </location>
</feature>
<feature type="strand" evidence="4">
    <location>
        <begin position="278"/>
        <end position="281"/>
    </location>
</feature>
<feature type="helix" evidence="4">
    <location>
        <begin position="290"/>
        <end position="295"/>
    </location>
</feature>
<feature type="helix" evidence="4">
    <location>
        <begin position="297"/>
        <end position="310"/>
    </location>
</feature>
<feature type="strand" evidence="4">
    <location>
        <begin position="313"/>
        <end position="317"/>
    </location>
</feature>
<feature type="helix" evidence="4">
    <location>
        <begin position="320"/>
        <end position="331"/>
    </location>
</feature>
<feature type="helix" evidence="4">
    <location>
        <begin position="340"/>
        <end position="344"/>
    </location>
</feature>
<feature type="helix" evidence="4">
    <location>
        <begin position="350"/>
        <end position="362"/>
    </location>
</feature>
<feature type="turn" evidence="4">
    <location>
        <begin position="363"/>
        <end position="365"/>
    </location>
</feature>
<feature type="strand" evidence="4">
    <location>
        <begin position="369"/>
        <end position="375"/>
    </location>
</feature>
<feature type="helix" evidence="4">
    <location>
        <begin position="381"/>
        <end position="383"/>
    </location>
</feature>
<feature type="helix" evidence="4">
    <location>
        <begin position="385"/>
        <end position="394"/>
    </location>
</feature>
<feature type="turn" evidence="4">
    <location>
        <begin position="395"/>
        <end position="397"/>
    </location>
</feature>
<feature type="helix" evidence="4">
    <location>
        <begin position="400"/>
        <end position="402"/>
    </location>
</feature>
<feature type="helix" evidence="4">
    <location>
        <begin position="405"/>
        <end position="422"/>
    </location>
</feature>
<feature type="helix" evidence="4">
    <location>
        <begin position="426"/>
        <end position="434"/>
    </location>
</feature>
<feature type="turn" evidence="4">
    <location>
        <begin position="444"/>
        <end position="446"/>
    </location>
</feature>
<feature type="helix" evidence="4">
    <location>
        <begin position="454"/>
        <end position="460"/>
    </location>
</feature>
<feature type="helix" evidence="4">
    <location>
        <begin position="467"/>
        <end position="476"/>
    </location>
</feature>
<feature type="turn" evidence="4">
    <location>
        <begin position="477"/>
        <end position="479"/>
    </location>
</feature>
<feature type="helix" evidence="4">
    <location>
        <begin position="482"/>
        <end position="485"/>
    </location>
</feature>
<feature type="strand" evidence="4">
    <location>
        <begin position="488"/>
        <end position="490"/>
    </location>
</feature>
<feature type="helix" evidence="4">
    <location>
        <begin position="492"/>
        <end position="494"/>
    </location>
</feature>
<feature type="helix" evidence="4">
    <location>
        <begin position="503"/>
        <end position="505"/>
    </location>
</feature>
<feature type="turn" evidence="4">
    <location>
        <begin position="506"/>
        <end position="508"/>
    </location>
</feature>
<feature type="helix" evidence="4">
    <location>
        <begin position="515"/>
        <end position="517"/>
    </location>
</feature>
<feature type="helix" evidence="4">
    <location>
        <begin position="522"/>
        <end position="524"/>
    </location>
</feature>
<feature type="helix" evidence="4">
    <location>
        <begin position="525"/>
        <end position="531"/>
    </location>
</feature>
<feature type="turn" evidence="4">
    <location>
        <begin position="546"/>
        <end position="548"/>
    </location>
</feature>
<feature type="helix" evidence="4">
    <location>
        <begin position="553"/>
        <end position="564"/>
    </location>
</feature>
<feature type="helix" evidence="4">
    <location>
        <begin position="577"/>
        <end position="594"/>
    </location>
</feature>
<feature type="helix" evidence="4">
    <location>
        <begin position="595"/>
        <end position="598"/>
    </location>
</feature>
<feature type="helix" evidence="4">
    <location>
        <begin position="599"/>
        <end position="606"/>
    </location>
</feature>
<feature type="helix" evidence="4">
    <location>
        <begin position="609"/>
        <end position="613"/>
    </location>
</feature>
<feature type="strand" evidence="4">
    <location>
        <begin position="614"/>
        <end position="617"/>
    </location>
</feature>
<feature type="helix" evidence="4">
    <location>
        <begin position="628"/>
        <end position="630"/>
    </location>
</feature>
<feature type="strand" evidence="4">
    <location>
        <begin position="631"/>
        <end position="636"/>
    </location>
</feature>
<feature type="helix" evidence="4">
    <location>
        <begin position="638"/>
        <end position="640"/>
    </location>
</feature>
<feature type="helix" evidence="4">
    <location>
        <begin position="641"/>
        <end position="647"/>
    </location>
</feature>
<feature type="turn" evidence="4">
    <location>
        <begin position="663"/>
        <end position="666"/>
    </location>
</feature>
<feature type="helix" evidence="4">
    <location>
        <begin position="667"/>
        <end position="686"/>
    </location>
</feature>
<feature type="helix" evidence="4">
    <location>
        <begin position="690"/>
        <end position="693"/>
    </location>
</feature>
<feature type="helix" evidence="4">
    <location>
        <begin position="696"/>
        <end position="711"/>
    </location>
</feature>
<feature type="helix" evidence="4">
    <location>
        <begin position="717"/>
        <end position="720"/>
    </location>
</feature>
<feature type="strand" evidence="4">
    <location>
        <begin position="722"/>
        <end position="726"/>
    </location>
</feature>
<feature type="helix" evidence="4">
    <location>
        <begin position="732"/>
        <end position="740"/>
    </location>
</feature>
<feature type="helix" evidence="4">
    <location>
        <begin position="749"/>
        <end position="767"/>
    </location>
</feature>
<feature type="helix" evidence="4">
    <location>
        <begin position="768"/>
        <end position="771"/>
    </location>
</feature>
<feature type="strand" evidence="4">
    <location>
        <begin position="772"/>
        <end position="776"/>
    </location>
</feature>
<feature type="strand" evidence="4">
    <location>
        <begin position="778"/>
        <end position="782"/>
    </location>
</feature>
<feature type="strand" evidence="4">
    <location>
        <begin position="793"/>
        <end position="800"/>
    </location>
</feature>
<feature type="helix" evidence="4">
    <location>
        <begin position="803"/>
        <end position="805"/>
    </location>
</feature>
<feature type="strand" evidence="4">
    <location>
        <begin position="806"/>
        <end position="812"/>
    </location>
</feature>
<feature type="helix" evidence="4">
    <location>
        <begin position="815"/>
        <end position="822"/>
    </location>
</feature>
<feature type="strand" evidence="4">
    <location>
        <begin position="825"/>
        <end position="827"/>
    </location>
</feature>
<feature type="strand" evidence="4">
    <location>
        <begin position="829"/>
        <end position="831"/>
    </location>
</feature>
<feature type="strand" evidence="4">
    <location>
        <begin position="833"/>
        <end position="835"/>
    </location>
</feature>
<feature type="helix" evidence="4">
    <location>
        <begin position="836"/>
        <end position="842"/>
    </location>
</feature>
<feature type="helix" evidence="4">
    <location>
        <begin position="849"/>
        <end position="853"/>
    </location>
</feature>
<feature type="strand" evidence="4">
    <location>
        <begin position="867"/>
        <end position="872"/>
    </location>
</feature>
<feature type="strand" evidence="4">
    <location>
        <begin position="876"/>
        <end position="885"/>
    </location>
</feature>
<feature type="helix" evidence="4">
    <location>
        <begin position="900"/>
        <end position="909"/>
    </location>
</feature>
<feature type="strand" evidence="4">
    <location>
        <begin position="919"/>
        <end position="928"/>
    </location>
</feature>
<feature type="helix" evidence="4">
    <location>
        <begin position="942"/>
        <end position="949"/>
    </location>
</feature>
<feature type="helix" evidence="4">
    <location>
        <begin position="950"/>
        <end position="952"/>
    </location>
</feature>
<feature type="strand" evidence="4">
    <location>
        <begin position="956"/>
        <end position="958"/>
    </location>
</feature>
<feature type="helix" evidence="4">
    <location>
        <begin position="961"/>
        <end position="963"/>
    </location>
</feature>
<feature type="strand" evidence="4">
    <location>
        <begin position="967"/>
        <end position="971"/>
    </location>
</feature>
<feature type="helix" evidence="4">
    <location>
        <begin position="972"/>
        <end position="978"/>
    </location>
</feature>
<feature type="strand" evidence="4">
    <location>
        <begin position="981"/>
        <end position="988"/>
    </location>
</feature>
<feature type="strand" evidence="4">
    <location>
        <begin position="1000"/>
        <end position="1002"/>
    </location>
</feature>
<protein>
    <recommendedName>
        <fullName>Outer capsid protein P3</fullName>
    </recommendedName>
    <alternativeName>
        <fullName>Core protein P3</fullName>
    </alternativeName>
</protein>
<keyword id="KW-0002">3D-structure</keyword>
<keyword id="KW-0167">Capsid protein</keyword>
<keyword id="KW-0903">Direct protein sequencing</keyword>
<keyword id="KW-1035">Host cytoplasm</keyword>
<keyword id="KW-1152">Outer capsid protein</keyword>
<keyword id="KW-0946">Virion</keyword>
<organismHost>
    <name type="scientific">Alopecurus aequalis</name>
    <dbReference type="NCBI Taxonomy" id="114194"/>
</organismHost>
<organismHost>
    <name type="scientific">Echinochloa crus-galli</name>
    <name type="common">Barnyard grass</name>
    <name type="synonym">Panicum crus-galli</name>
    <dbReference type="NCBI Taxonomy" id="90397"/>
</organismHost>
<organismHost>
    <name type="scientific">Nephotettix cincticeps</name>
    <name type="common">Green rice leafhopper</name>
    <name type="synonym">Selenocephalus cincticeps</name>
    <dbReference type="NCBI Taxonomy" id="94400"/>
</organismHost>
<organismHost>
    <name type="scientific">Oryza sativa</name>
    <name type="common">Rice</name>
    <dbReference type="NCBI Taxonomy" id="4530"/>
</organismHost>
<organismHost>
    <name type="scientific">Paspalum</name>
    <dbReference type="NCBI Taxonomy" id="147271"/>
</organismHost>
<organism>
    <name type="scientific">Rice dwarf virus (isolate Akita)</name>
    <name type="common">RDV</name>
    <dbReference type="NCBI Taxonomy" id="142803"/>
    <lineage>
        <taxon>Viruses</taxon>
        <taxon>Riboviria</taxon>
        <taxon>Orthornavirae</taxon>
        <taxon>Duplornaviricota</taxon>
        <taxon>Resentoviricetes</taxon>
        <taxon>Reovirales</taxon>
        <taxon>Sedoreoviridae</taxon>
        <taxon>Phytoreovirus</taxon>
        <taxon>Rice dwarf virus</taxon>
    </lineage>
</organism>
<name>P3_RDVA</name>
<reference key="1">
    <citation type="journal article" date="1990" name="Virology">
        <title>Sequence analysis of the rice dwarf phytoreovirus segment S3 transcript encoding for the major structural core protein of 114 kDa.</title>
        <authorList>
            <person name="Suzuki N."/>
            <person name="Watanabe Y."/>
            <person name="Kusano T."/>
            <person name="Kitagawa Y."/>
        </authorList>
    </citation>
    <scope>NUCLEOTIDE SEQUENCE [GENOMIC RNA]</scope>
    <scope>PROTEIN SEQUENCE OF 501-519</scope>
</reference>
<reference key="2">
    <citation type="journal article" date="1990" name="Nucleic Acids Res.">
        <title>Nucleotide sequence of rice dwarf virus genome segment 3.</title>
        <authorList>
            <person name="Yamada N."/>
            <person name="Uyeda I."/>
            <person name="Kudo H."/>
            <person name="Shikata E."/>
        </authorList>
    </citation>
    <scope>NUCLEOTIDE SEQUENCE [GENOMIC RNA]</scope>
</reference>
<reference key="3">
    <citation type="journal article" date="1990" name="Nucleic Acids Res.">
        <title>Nucleotide sequence of rice dwarf virus (RDV) genome segment S3 coding for 114 K major core protein.</title>
        <authorList>
            <person name="Kano H."/>
            <person name="Koizumi M."/>
            <person name="Noda H."/>
            <person name="Mizuno H."/>
            <person name="Tsukihara T."/>
            <person name="Ishikawa K."/>
            <person name="Hibino H."/>
            <person name="Omura T."/>
        </authorList>
    </citation>
    <scope>NUCLEOTIDE SEQUENCE [GENOMIC RNA]</scope>
</reference>
<reference key="4">
    <citation type="journal article" date="2003" name="Structure">
        <title>The atomic structure of rice dwarf virus reveals the self-assembly mechanism of component proteins.</title>
        <authorList>
            <person name="Nakagawa A."/>
            <person name="Miyazaki N."/>
            <person name="Taka J."/>
            <person name="Naitow H."/>
            <person name="Ogawa A."/>
            <person name="Fujimoto Z."/>
            <person name="Mizuno H."/>
            <person name="Higashi T."/>
            <person name="Watanabe Y."/>
            <person name="Omura T."/>
            <person name="Cheng R.H."/>
            <person name="Tsukihara T."/>
        </authorList>
    </citation>
    <scope>X-RAY CRYSTALLOGRAPHY (3.5 ANGSTROMS)</scope>
    <scope>FUNCTION</scope>
</reference>
<comment type="function">
    <text evidence="2">Capsid protein which self-assembles to form the inner icosahedral capsid with a T=2 symmetry, and consisting of 60 P3 dimers.</text>
</comment>
<comment type="subunit">
    <text>Homodimer. Homomultimer.</text>
</comment>
<comment type="subcellular location">
    <subcellularLocation>
        <location evidence="3">Virion</location>
    </subcellularLocation>
    <subcellularLocation>
        <location evidence="1">Host cytoplasm</location>
    </subcellularLocation>
    <text evidence="1">Found in the interior of spherical cytoplasmic structures, called virus factories, that appear early after infection and are the site of viral replication and packaging.</text>
</comment>
<comment type="similarity">
    <text evidence="3">Belongs to the phytoreovirus inner capsid protein P3 family.</text>
</comment>